<organism>
    <name type="scientific">Salmonella enteritidis PT4 (strain P125109)</name>
    <dbReference type="NCBI Taxonomy" id="550537"/>
    <lineage>
        <taxon>Bacteria</taxon>
        <taxon>Pseudomonadati</taxon>
        <taxon>Pseudomonadota</taxon>
        <taxon>Gammaproteobacteria</taxon>
        <taxon>Enterobacterales</taxon>
        <taxon>Enterobacteriaceae</taxon>
        <taxon>Salmonella</taxon>
    </lineage>
</organism>
<sequence>MELTTRTLPTRKHIALVAHDHCKQMLMNWVERHQPLLEKHVLYATGTTGNLIQRATGMDVNAMLSGPMGGDQQVGALISEGKIDVLIFFWDPLNAVPHDPDVKALLRLATVWNIPVATNVSTADFIIQSPHFNDAVDILIPDYARYLAERLK</sequence>
<accession>B5QZG6</accession>
<comment type="function">
    <text evidence="1">Catalyzes the formation of methylglyoxal from dihydroxyacetone phosphate.</text>
</comment>
<comment type="catalytic activity">
    <reaction evidence="1">
        <text>dihydroxyacetone phosphate = methylglyoxal + phosphate</text>
        <dbReference type="Rhea" id="RHEA:17937"/>
        <dbReference type="ChEBI" id="CHEBI:17158"/>
        <dbReference type="ChEBI" id="CHEBI:43474"/>
        <dbReference type="ChEBI" id="CHEBI:57642"/>
        <dbReference type="EC" id="4.2.3.3"/>
    </reaction>
</comment>
<comment type="similarity">
    <text evidence="1">Belongs to the methylglyoxal synthase family.</text>
</comment>
<dbReference type="EC" id="4.2.3.3" evidence="1"/>
<dbReference type="EMBL" id="AM933172">
    <property type="protein sequence ID" value="CAR32524.1"/>
    <property type="molecule type" value="Genomic_DNA"/>
</dbReference>
<dbReference type="RefSeq" id="WP_000424187.1">
    <property type="nucleotide sequence ID" value="NC_011294.1"/>
</dbReference>
<dbReference type="SMR" id="B5QZG6"/>
<dbReference type="KEGG" id="set:SEN0941"/>
<dbReference type="HOGENOM" id="CLU_120420_0_1_6"/>
<dbReference type="Proteomes" id="UP000000613">
    <property type="component" value="Chromosome"/>
</dbReference>
<dbReference type="GO" id="GO:0005829">
    <property type="term" value="C:cytosol"/>
    <property type="evidence" value="ECO:0007669"/>
    <property type="project" value="TreeGrafter"/>
</dbReference>
<dbReference type="GO" id="GO:0008929">
    <property type="term" value="F:methylglyoxal synthase activity"/>
    <property type="evidence" value="ECO:0007669"/>
    <property type="project" value="UniProtKB-UniRule"/>
</dbReference>
<dbReference type="GO" id="GO:0019242">
    <property type="term" value="P:methylglyoxal biosynthetic process"/>
    <property type="evidence" value="ECO:0007669"/>
    <property type="project" value="UniProtKB-UniRule"/>
</dbReference>
<dbReference type="CDD" id="cd01422">
    <property type="entry name" value="MGS"/>
    <property type="match status" value="1"/>
</dbReference>
<dbReference type="FunFam" id="3.40.50.1380:FF:000002">
    <property type="entry name" value="Methylglyoxal synthase"/>
    <property type="match status" value="1"/>
</dbReference>
<dbReference type="Gene3D" id="3.40.50.1380">
    <property type="entry name" value="Methylglyoxal synthase-like domain"/>
    <property type="match status" value="1"/>
</dbReference>
<dbReference type="HAMAP" id="MF_00549">
    <property type="entry name" value="Methylglyoxal_synth"/>
    <property type="match status" value="1"/>
</dbReference>
<dbReference type="InterPro" id="IPR004363">
    <property type="entry name" value="Methylgl_synth"/>
</dbReference>
<dbReference type="InterPro" id="IPR018148">
    <property type="entry name" value="Methylglyoxal_synth_AS"/>
</dbReference>
<dbReference type="InterPro" id="IPR011607">
    <property type="entry name" value="MGS-like_dom"/>
</dbReference>
<dbReference type="InterPro" id="IPR036914">
    <property type="entry name" value="MGS-like_dom_sf"/>
</dbReference>
<dbReference type="NCBIfam" id="TIGR00160">
    <property type="entry name" value="MGSA"/>
    <property type="match status" value="1"/>
</dbReference>
<dbReference type="NCBIfam" id="NF003559">
    <property type="entry name" value="PRK05234.1"/>
    <property type="match status" value="1"/>
</dbReference>
<dbReference type="PANTHER" id="PTHR30492">
    <property type="entry name" value="METHYLGLYOXAL SYNTHASE"/>
    <property type="match status" value="1"/>
</dbReference>
<dbReference type="PANTHER" id="PTHR30492:SF0">
    <property type="entry name" value="METHYLGLYOXAL SYNTHASE"/>
    <property type="match status" value="1"/>
</dbReference>
<dbReference type="Pfam" id="PF02142">
    <property type="entry name" value="MGS"/>
    <property type="match status" value="1"/>
</dbReference>
<dbReference type="PIRSF" id="PIRSF006614">
    <property type="entry name" value="Methylglyox_syn"/>
    <property type="match status" value="1"/>
</dbReference>
<dbReference type="SMART" id="SM00851">
    <property type="entry name" value="MGS"/>
    <property type="match status" value="1"/>
</dbReference>
<dbReference type="SUPFAM" id="SSF52335">
    <property type="entry name" value="Methylglyoxal synthase-like"/>
    <property type="match status" value="1"/>
</dbReference>
<dbReference type="PROSITE" id="PS01335">
    <property type="entry name" value="METHYLGLYOXAL_SYNTH"/>
    <property type="match status" value="1"/>
</dbReference>
<dbReference type="PROSITE" id="PS51855">
    <property type="entry name" value="MGS"/>
    <property type="match status" value="1"/>
</dbReference>
<proteinExistence type="inferred from homology"/>
<protein>
    <recommendedName>
        <fullName evidence="1">Methylglyoxal synthase</fullName>
        <shortName evidence="1">MGS</shortName>
        <ecNumber evidence="1">4.2.3.3</ecNumber>
    </recommendedName>
</protein>
<gene>
    <name evidence="1" type="primary">mgsA</name>
    <name type="ordered locus">SEN0941</name>
</gene>
<name>MGSA_SALEP</name>
<feature type="chain" id="PRO_1000129004" description="Methylglyoxal synthase">
    <location>
        <begin position="1"/>
        <end position="152"/>
    </location>
</feature>
<feature type="domain" description="MGS-like" evidence="1">
    <location>
        <begin position="6"/>
        <end position="152"/>
    </location>
</feature>
<feature type="active site" description="Proton donor/acceptor" evidence="1">
    <location>
        <position position="71"/>
    </location>
</feature>
<feature type="binding site" evidence="1">
    <location>
        <position position="19"/>
    </location>
    <ligand>
        <name>substrate</name>
    </ligand>
</feature>
<feature type="binding site" evidence="1">
    <location>
        <position position="23"/>
    </location>
    <ligand>
        <name>substrate</name>
    </ligand>
</feature>
<feature type="binding site" evidence="1">
    <location>
        <begin position="45"/>
        <end position="48"/>
    </location>
    <ligand>
        <name>substrate</name>
    </ligand>
</feature>
<feature type="binding site" evidence="1">
    <location>
        <begin position="65"/>
        <end position="66"/>
    </location>
    <ligand>
        <name>substrate</name>
    </ligand>
</feature>
<feature type="binding site" evidence="1">
    <location>
        <position position="98"/>
    </location>
    <ligand>
        <name>substrate</name>
    </ligand>
</feature>
<evidence type="ECO:0000255" key="1">
    <source>
        <dbReference type="HAMAP-Rule" id="MF_00549"/>
    </source>
</evidence>
<reference key="1">
    <citation type="journal article" date="2008" name="Genome Res.">
        <title>Comparative genome analysis of Salmonella enteritidis PT4 and Salmonella gallinarum 287/91 provides insights into evolutionary and host adaptation pathways.</title>
        <authorList>
            <person name="Thomson N.R."/>
            <person name="Clayton D.J."/>
            <person name="Windhorst D."/>
            <person name="Vernikos G."/>
            <person name="Davidson S."/>
            <person name="Churcher C."/>
            <person name="Quail M.A."/>
            <person name="Stevens M."/>
            <person name="Jones M.A."/>
            <person name="Watson M."/>
            <person name="Barron A."/>
            <person name="Layton A."/>
            <person name="Pickard D."/>
            <person name="Kingsley R.A."/>
            <person name="Bignell A."/>
            <person name="Clark L."/>
            <person name="Harris B."/>
            <person name="Ormond D."/>
            <person name="Abdellah Z."/>
            <person name="Brooks K."/>
            <person name="Cherevach I."/>
            <person name="Chillingworth T."/>
            <person name="Woodward J."/>
            <person name="Norberczak H."/>
            <person name="Lord A."/>
            <person name="Arrowsmith C."/>
            <person name="Jagels K."/>
            <person name="Moule S."/>
            <person name="Mungall K."/>
            <person name="Saunders M."/>
            <person name="Whitehead S."/>
            <person name="Chabalgoity J.A."/>
            <person name="Maskell D."/>
            <person name="Humphreys T."/>
            <person name="Roberts M."/>
            <person name="Barrow P.A."/>
            <person name="Dougan G."/>
            <person name="Parkhill J."/>
        </authorList>
    </citation>
    <scope>NUCLEOTIDE SEQUENCE [LARGE SCALE GENOMIC DNA]</scope>
    <source>
        <strain>P125109</strain>
    </source>
</reference>
<keyword id="KW-0456">Lyase</keyword>